<evidence type="ECO:0000250" key="1">
    <source>
        <dbReference type="UniProtKB" id="P37784"/>
    </source>
</evidence>
<evidence type="ECO:0000250" key="2">
    <source>
        <dbReference type="UniProtKB" id="Q58YW1"/>
    </source>
</evidence>
<evidence type="ECO:0000255" key="3"/>
<evidence type="ECO:0000303" key="4">
    <source>
    </source>
</evidence>
<gene>
    <name evidence="1" type="primary">wzy</name>
    <name evidence="4" type="synonym">rfc</name>
</gene>
<protein>
    <recommendedName>
        <fullName evidence="4">O-antigen polymerase</fullName>
        <ecNumber evidence="2">2.4.99.27</ecNumber>
    </recommendedName>
</protein>
<accession>Q03584</accession>
<comment type="function">
    <text evidence="2">Polymerase involved in the biosynthesis of the lipopolysaccharide (LPS) (By similarity). Catalyzes the polymerization of the O-antigen repeat units on the periplasmic face of the inner membrane, leading to the formation of the lipid-linked O-antigen molecule (By similarity).</text>
</comment>
<comment type="catalytic activity">
    <reaction evidence="2">
        <text>n lipid-linked O-antigen repeat units = a lipid-linked O antigen + (n-1) polyisoprenyl diphosphate.</text>
        <dbReference type="EC" id="2.4.99.27"/>
    </reaction>
</comment>
<comment type="pathway">
    <text evidence="1">Bacterial outer membrane biogenesis; LPS O-antigen biosynthesis.</text>
</comment>
<comment type="subcellular location">
    <subcellularLocation>
        <location evidence="1">Cell inner membrane</location>
        <topology evidence="3">Multi-pass membrane protein</topology>
    </subcellularLocation>
</comment>
<name>WZY_SHIDY</name>
<keyword id="KW-0997">Cell inner membrane</keyword>
<keyword id="KW-1003">Cell membrane</keyword>
<keyword id="KW-0448">Lipopolysaccharide biosynthesis</keyword>
<keyword id="KW-0472">Membrane</keyword>
<keyword id="KW-0808">Transferase</keyword>
<keyword id="KW-0812">Transmembrane</keyword>
<keyword id="KW-1133">Transmembrane helix</keyword>
<reference key="1">
    <citation type="journal article" date="1986" name="Microb. Pathog.">
        <title>Genetic and biochemical analysis of Shigella dysenteriae 1 O antigen polysaccharide biosynthesis in Escherichia coli K-12: structure and functions of the rfb gene cluster.</title>
        <authorList>
            <person name="Sturm S."/>
            <person name="Jann B."/>
            <person name="Jann K."/>
            <person name="Fortnagel P."/>
            <person name="Timmis K.N."/>
        </authorList>
    </citation>
    <scope>NUCLEOTIDE SEQUENCE [GENOMIC DNA]</scope>
</reference>
<reference key="2">
    <citation type="journal article" date="1993" name="Mol. Microbiol.">
        <title>Function of the rfb gene cluster and the rfe gene in the synthesis of O antigen by Shigella dysenteriae 1.</title>
        <authorList>
            <person name="Klena J.D."/>
            <person name="Schnaitman C.A."/>
        </authorList>
    </citation>
    <scope>NUCLEOTIDE SEQUENCE [GENOMIC DNA]</scope>
</reference>
<proteinExistence type="inferred from homology"/>
<organism>
    <name type="scientific">Shigella dysenteriae</name>
    <dbReference type="NCBI Taxonomy" id="622"/>
    <lineage>
        <taxon>Bacteria</taxon>
        <taxon>Pseudomonadati</taxon>
        <taxon>Pseudomonadota</taxon>
        <taxon>Gammaproteobacteria</taxon>
        <taxon>Enterobacterales</taxon>
        <taxon>Enterobacteriaceae</taxon>
        <taxon>Shigella</taxon>
    </lineage>
</organism>
<feature type="chain" id="PRO_0000097302" description="O-antigen polymerase">
    <location>
        <begin position="1"/>
        <end position="380"/>
    </location>
</feature>
<feature type="transmembrane region" description="Helical" evidence="3">
    <location>
        <begin position="1"/>
        <end position="21"/>
    </location>
</feature>
<feature type="transmembrane region" description="Helical" evidence="3">
    <location>
        <begin position="27"/>
        <end position="47"/>
    </location>
</feature>
<feature type="transmembrane region" description="Helical" evidence="3">
    <location>
        <begin position="55"/>
        <end position="75"/>
    </location>
</feature>
<feature type="transmembrane region" description="Helical" evidence="3">
    <location>
        <begin position="94"/>
        <end position="114"/>
    </location>
</feature>
<feature type="transmembrane region" description="Helical" evidence="3">
    <location>
        <begin position="132"/>
        <end position="152"/>
    </location>
</feature>
<feature type="transmembrane region" description="Helical" evidence="3">
    <location>
        <begin position="169"/>
        <end position="189"/>
    </location>
</feature>
<feature type="transmembrane region" description="Helical" evidence="3">
    <location>
        <begin position="201"/>
        <end position="221"/>
    </location>
</feature>
<feature type="transmembrane region" description="Helical" evidence="3">
    <location>
        <begin position="229"/>
        <end position="249"/>
    </location>
</feature>
<feature type="transmembrane region" description="Helical" evidence="3">
    <location>
        <begin position="282"/>
        <end position="302"/>
    </location>
</feature>
<feature type="transmembrane region" description="Helical" evidence="3">
    <location>
        <begin position="306"/>
        <end position="326"/>
    </location>
</feature>
<feature type="transmembrane region" description="Helical" evidence="3">
    <location>
        <begin position="332"/>
        <end position="352"/>
    </location>
</feature>
<feature type="transmembrane region" description="Helical" evidence="3">
    <location>
        <begin position="353"/>
        <end position="373"/>
    </location>
</feature>
<sequence>MTYFTGFILILFAIIIKRLTPSQSKKNIVLIANAFWGILLVGYTFNEQYFVPLSATTLFFILAFLFFFSMTYILIARSGRVVFSFGTGFIESKYIYWFAGMINIISICFGIILLYNNHFSLKVMREGILDGSISGFGLGISLPLSFCCMYLARHENKKNYFYCFTLLSFLLAVLSTSKIFLILFLVYIVGINSYVSKKKLLIYGVFVFGLFALSSIILGKFSSDPEGKIISAIFDTLRVYLFSGLAAFNLYVEKNATLPENLLLYPFKEVWGTTKDIPKTDILPWINIGVWDTNVYTAFAPWYQSLGLYAAIIIGILLGFYYGIWFSFRQNLAVGFYQTFLCFPLLMLFFQEHYLLSWKMHFIYFLCAILLAMRKALEYE</sequence>
<dbReference type="EC" id="2.4.99.27" evidence="2"/>
<dbReference type="EMBL" id="L07293">
    <property type="protein sequence ID" value="AAA16935.1"/>
    <property type="molecule type" value="Unassigned_DNA"/>
</dbReference>
<dbReference type="PIR" id="S34964">
    <property type="entry name" value="S34964"/>
</dbReference>
<dbReference type="UniPathway" id="UPA00281"/>
<dbReference type="GO" id="GO:0005886">
    <property type="term" value="C:plasma membrane"/>
    <property type="evidence" value="ECO:0007669"/>
    <property type="project" value="UniProtKB-SubCell"/>
</dbReference>
<dbReference type="GO" id="GO:0016740">
    <property type="term" value="F:transferase activity"/>
    <property type="evidence" value="ECO:0007669"/>
    <property type="project" value="UniProtKB-KW"/>
</dbReference>
<dbReference type="GO" id="GO:0009103">
    <property type="term" value="P:lipopolysaccharide biosynthetic process"/>
    <property type="evidence" value="ECO:0007669"/>
    <property type="project" value="UniProtKB-UniPathway"/>
</dbReference>
<dbReference type="NCBIfam" id="TIGR04370">
    <property type="entry name" value="glyco_rpt_poly"/>
    <property type="match status" value="1"/>
</dbReference>